<keyword id="KW-0963">Cytoplasm</keyword>
<keyword id="KW-0378">Hydrolase</keyword>
<keyword id="KW-0540">Nuclease</keyword>
<keyword id="KW-0690">Ribosome biogenesis</keyword>
<accession>Q0S0N6</accession>
<protein>
    <recommendedName>
        <fullName evidence="1">Putative pre-16S rRNA nuclease</fullName>
        <ecNumber evidence="1">3.1.-.-</ecNumber>
    </recommendedName>
</protein>
<feature type="chain" id="PRO_0000257576" description="Putative pre-16S rRNA nuclease">
    <location>
        <begin position="1"/>
        <end position="178"/>
    </location>
</feature>
<feature type="region of interest" description="Disordered" evidence="2">
    <location>
        <begin position="1"/>
        <end position="21"/>
    </location>
</feature>
<feature type="compositionally biased region" description="Basic and acidic residues" evidence="2">
    <location>
        <begin position="1"/>
        <end position="18"/>
    </location>
</feature>
<gene>
    <name type="ordered locus">RHA1_ro07136</name>
</gene>
<sequence length="178" mass="18900">MDHAEQGPDRPGVDDPGRGRRIGIDVGSVRIGVASSDPDGILATPVETVPRSKERGPDAPDIRRIADIVEEYEAVEVIVGLPQTLRGERGKAASIATVFAKRLRRKVDPIPVRMADERLTTVTAARALRESGVSARGQRPVIDQAAAVAILQGWLDERSRSVNAGDSGGDAQLPEGGQ</sequence>
<proteinExistence type="inferred from homology"/>
<name>YQGF_RHOJR</name>
<evidence type="ECO:0000255" key="1">
    <source>
        <dbReference type="HAMAP-Rule" id="MF_00651"/>
    </source>
</evidence>
<evidence type="ECO:0000256" key="2">
    <source>
        <dbReference type="SAM" id="MobiDB-lite"/>
    </source>
</evidence>
<comment type="function">
    <text evidence="1">Could be a nuclease involved in processing of the 5'-end of pre-16S rRNA.</text>
</comment>
<comment type="subcellular location">
    <subcellularLocation>
        <location evidence="1">Cytoplasm</location>
    </subcellularLocation>
</comment>
<comment type="similarity">
    <text evidence="1">Belongs to the YqgF nuclease family.</text>
</comment>
<organism>
    <name type="scientific">Rhodococcus jostii (strain RHA1)</name>
    <dbReference type="NCBI Taxonomy" id="101510"/>
    <lineage>
        <taxon>Bacteria</taxon>
        <taxon>Bacillati</taxon>
        <taxon>Actinomycetota</taxon>
        <taxon>Actinomycetes</taxon>
        <taxon>Mycobacteriales</taxon>
        <taxon>Nocardiaceae</taxon>
        <taxon>Rhodococcus</taxon>
    </lineage>
</organism>
<dbReference type="EC" id="3.1.-.-" evidence="1"/>
<dbReference type="EMBL" id="CP000431">
    <property type="protein sequence ID" value="ABG98900.1"/>
    <property type="molecule type" value="Genomic_DNA"/>
</dbReference>
<dbReference type="RefSeq" id="WP_009480409.1">
    <property type="nucleotide sequence ID" value="NC_008268.1"/>
</dbReference>
<dbReference type="SMR" id="Q0S0N6"/>
<dbReference type="KEGG" id="rha:RHA1_ro07136"/>
<dbReference type="eggNOG" id="COG0816">
    <property type="taxonomic scope" value="Bacteria"/>
</dbReference>
<dbReference type="HOGENOM" id="CLU_098240_0_1_11"/>
<dbReference type="OrthoDB" id="9790539at2"/>
<dbReference type="Proteomes" id="UP000008710">
    <property type="component" value="Chromosome"/>
</dbReference>
<dbReference type="GO" id="GO:0005829">
    <property type="term" value="C:cytosol"/>
    <property type="evidence" value="ECO:0007669"/>
    <property type="project" value="TreeGrafter"/>
</dbReference>
<dbReference type="GO" id="GO:0004518">
    <property type="term" value="F:nuclease activity"/>
    <property type="evidence" value="ECO:0007669"/>
    <property type="project" value="UniProtKB-KW"/>
</dbReference>
<dbReference type="GO" id="GO:0000967">
    <property type="term" value="P:rRNA 5'-end processing"/>
    <property type="evidence" value="ECO:0007669"/>
    <property type="project" value="UniProtKB-UniRule"/>
</dbReference>
<dbReference type="CDD" id="cd16964">
    <property type="entry name" value="YqgF"/>
    <property type="match status" value="1"/>
</dbReference>
<dbReference type="FunFam" id="3.30.420.140:FF:000005">
    <property type="entry name" value="Putative pre-16S rRNA nuclease"/>
    <property type="match status" value="1"/>
</dbReference>
<dbReference type="Gene3D" id="3.30.420.140">
    <property type="entry name" value="YqgF/RNase H-like domain"/>
    <property type="match status" value="1"/>
</dbReference>
<dbReference type="HAMAP" id="MF_00651">
    <property type="entry name" value="Nuclease_YqgF"/>
    <property type="match status" value="1"/>
</dbReference>
<dbReference type="InterPro" id="IPR012337">
    <property type="entry name" value="RNaseH-like_sf"/>
</dbReference>
<dbReference type="InterPro" id="IPR005227">
    <property type="entry name" value="YqgF"/>
</dbReference>
<dbReference type="InterPro" id="IPR006641">
    <property type="entry name" value="YqgF/RNaseH-like_dom"/>
</dbReference>
<dbReference type="InterPro" id="IPR037027">
    <property type="entry name" value="YqgF/RNaseH-like_dom_sf"/>
</dbReference>
<dbReference type="NCBIfam" id="TIGR00250">
    <property type="entry name" value="RNAse_H_YqgF"/>
    <property type="match status" value="1"/>
</dbReference>
<dbReference type="PANTHER" id="PTHR33317">
    <property type="entry name" value="POLYNUCLEOTIDYL TRANSFERASE, RIBONUCLEASE H-LIKE SUPERFAMILY PROTEIN"/>
    <property type="match status" value="1"/>
</dbReference>
<dbReference type="PANTHER" id="PTHR33317:SF4">
    <property type="entry name" value="POLYNUCLEOTIDYL TRANSFERASE, RIBONUCLEASE H-LIKE SUPERFAMILY PROTEIN"/>
    <property type="match status" value="1"/>
</dbReference>
<dbReference type="Pfam" id="PF03652">
    <property type="entry name" value="RuvX"/>
    <property type="match status" value="1"/>
</dbReference>
<dbReference type="SMART" id="SM00732">
    <property type="entry name" value="YqgFc"/>
    <property type="match status" value="1"/>
</dbReference>
<dbReference type="SUPFAM" id="SSF53098">
    <property type="entry name" value="Ribonuclease H-like"/>
    <property type="match status" value="1"/>
</dbReference>
<reference key="1">
    <citation type="journal article" date="2006" name="Proc. Natl. Acad. Sci. U.S.A.">
        <title>The complete genome of Rhodococcus sp. RHA1 provides insights into a catabolic powerhouse.</title>
        <authorList>
            <person name="McLeod M.P."/>
            <person name="Warren R.L."/>
            <person name="Hsiao W.W.L."/>
            <person name="Araki N."/>
            <person name="Myhre M."/>
            <person name="Fernandes C."/>
            <person name="Miyazawa D."/>
            <person name="Wong W."/>
            <person name="Lillquist A.L."/>
            <person name="Wang D."/>
            <person name="Dosanjh M."/>
            <person name="Hara H."/>
            <person name="Petrescu A."/>
            <person name="Morin R.D."/>
            <person name="Yang G."/>
            <person name="Stott J.M."/>
            <person name="Schein J.E."/>
            <person name="Shin H."/>
            <person name="Smailus D."/>
            <person name="Siddiqui A.S."/>
            <person name="Marra M.A."/>
            <person name="Jones S.J.M."/>
            <person name="Holt R."/>
            <person name="Brinkman F.S.L."/>
            <person name="Miyauchi K."/>
            <person name="Fukuda M."/>
            <person name="Davies J.E."/>
            <person name="Mohn W.W."/>
            <person name="Eltis L.D."/>
        </authorList>
    </citation>
    <scope>NUCLEOTIDE SEQUENCE [LARGE SCALE GENOMIC DNA]</scope>
    <source>
        <strain>RHA1</strain>
    </source>
</reference>